<comment type="function">
    <text evidence="1">Catalyzes the transfer of the L-Ara4N moiety of the glycolipid undecaprenyl phosphate-alpha-L-Ara4N to lipid A. The modified arabinose is attached to lipid A and is required for resistance to polymyxin and cationic antimicrobial peptides.</text>
</comment>
<comment type="catalytic activity">
    <reaction evidence="1">
        <text>4-amino-4-deoxy-alpha-L-arabinopyranosyl di-trans,octa-cis-undecaprenyl phosphate + lipid IVA = lipid IIA + di-trans,octa-cis-undecaprenyl phosphate.</text>
        <dbReference type="EC" id="2.4.2.43"/>
    </reaction>
</comment>
<comment type="pathway">
    <text evidence="1">Lipopolysaccharide metabolism; 4-amino-4-deoxy-beta-L-arabinose-lipid A biosynthesis.</text>
</comment>
<comment type="subcellular location">
    <subcellularLocation>
        <location evidence="1">Cell inner membrane</location>
        <topology evidence="1">Multi-pass membrane protein</topology>
    </subcellularLocation>
</comment>
<comment type="similarity">
    <text evidence="1">Belongs to the glycosyltransferase 83 family.</text>
</comment>
<organism>
    <name type="scientific">Erwinia tasmaniensis (strain DSM 17950 / CFBP 7177 / CIP 109463 / NCPPB 4357 / Et1/99)</name>
    <dbReference type="NCBI Taxonomy" id="465817"/>
    <lineage>
        <taxon>Bacteria</taxon>
        <taxon>Pseudomonadati</taxon>
        <taxon>Pseudomonadota</taxon>
        <taxon>Gammaproteobacteria</taxon>
        <taxon>Enterobacterales</taxon>
        <taxon>Erwiniaceae</taxon>
        <taxon>Erwinia</taxon>
    </lineage>
</organism>
<name>ARNT_ERWT9</name>
<sequence>MKYTRYALLFSLFYALYYLIPLELRALWQPDEVRYAEISREMLVNGNWVVPHFLDLRYFEKPIAGYWINNIGQWLFGSNNFAVRIGSVFSITLSALLVYWLALRLWQQRSTALLSAVVFLTCLLVYGVGSYAVLDPMVTLWLVAAMCSFWLAAQSASRLQKVSGWLLLGLACGMGLMTKGFLALAVPVVAIVPWMIWQRRFKELLLFGPLALVSAALITAPWAISIARQEPDFWHYFFWVEHIQRFAQSDAQHKAPFWYYLPMLLAGALPWVGLLPGALQRAWRERSENSGSLYLLCWTVMPLLFFSLAKGKLPTYILPCFAPLAILLAHHGIKIAGTGSKALKANALINVAFGVIAALAVILVLAPWGLVHHPLYAKSEISKVLLGASAFLFWAAVGLACLVAGAKHWRLAALCPLGLALLAGAVIPDKVIDSKQPQSFISAVDNTLKHSRFVLANEVGLASTLAWELKRSDIQLFDRHGELEYGLSYPDAKGRFINLNDFSRWLSEHRREGSVSLVMKLSDDDQYIDERIPVPDQKYHRGRLVLWYYSQQP</sequence>
<gene>
    <name evidence="1" type="primary">arnT</name>
    <name type="ordered locus">ETA_23790</name>
</gene>
<protein>
    <recommendedName>
        <fullName evidence="1">Undecaprenyl phosphate-alpha-4-amino-4-deoxy-L-arabinose arabinosyl transferase</fullName>
        <ecNumber evidence="1">2.4.2.43</ecNumber>
    </recommendedName>
    <alternativeName>
        <fullName evidence="1">4-amino-4-deoxy-L-arabinose lipid A transferase</fullName>
    </alternativeName>
    <alternativeName>
        <fullName evidence="1">Lipid IV(A) 4-amino-4-deoxy-L-arabinosyltransferase</fullName>
    </alternativeName>
    <alternativeName>
        <fullName evidence="1">Undecaprenyl phosphate-alpha-L-Ara4N transferase</fullName>
    </alternativeName>
</protein>
<evidence type="ECO:0000255" key="1">
    <source>
        <dbReference type="HAMAP-Rule" id="MF_01165"/>
    </source>
</evidence>
<proteinExistence type="inferred from homology"/>
<reference key="1">
    <citation type="journal article" date="2008" name="Environ. Microbiol.">
        <title>The genome of Erwinia tasmaniensis strain Et1/99, a non-pathogenic bacterium in the genus Erwinia.</title>
        <authorList>
            <person name="Kube M."/>
            <person name="Migdoll A.M."/>
            <person name="Mueller I."/>
            <person name="Kuhl H."/>
            <person name="Beck A."/>
            <person name="Reinhardt R."/>
            <person name="Geider K."/>
        </authorList>
    </citation>
    <scope>NUCLEOTIDE SEQUENCE [LARGE SCALE GENOMIC DNA]</scope>
    <source>
        <strain>DSM 17950 / CFBP 7177 / CIP 109463 / NCPPB 4357 / Et1/99</strain>
    </source>
</reference>
<accession>B2VBI7</accession>
<dbReference type="EC" id="2.4.2.43" evidence="1"/>
<dbReference type="EMBL" id="CU468135">
    <property type="protein sequence ID" value="CAO97425.1"/>
    <property type="molecule type" value="Genomic_DNA"/>
</dbReference>
<dbReference type="RefSeq" id="WP_012442093.1">
    <property type="nucleotide sequence ID" value="NC_010694.1"/>
</dbReference>
<dbReference type="SMR" id="B2VBI7"/>
<dbReference type="STRING" id="465817.ETA_23790"/>
<dbReference type="CAZy" id="GT83">
    <property type="family name" value="Glycosyltransferase Family 83"/>
</dbReference>
<dbReference type="KEGG" id="eta:ETA_23790"/>
<dbReference type="eggNOG" id="COG1807">
    <property type="taxonomic scope" value="Bacteria"/>
</dbReference>
<dbReference type="HOGENOM" id="CLU_019200_2_1_6"/>
<dbReference type="OrthoDB" id="9775035at2"/>
<dbReference type="UniPathway" id="UPA00037"/>
<dbReference type="Proteomes" id="UP000001726">
    <property type="component" value="Chromosome"/>
</dbReference>
<dbReference type="GO" id="GO:0005886">
    <property type="term" value="C:plasma membrane"/>
    <property type="evidence" value="ECO:0007669"/>
    <property type="project" value="UniProtKB-SubCell"/>
</dbReference>
<dbReference type="GO" id="GO:0103015">
    <property type="term" value="F:4-amino-4-deoxy-L-arabinose transferase activity"/>
    <property type="evidence" value="ECO:0007669"/>
    <property type="project" value="UniProtKB-EC"/>
</dbReference>
<dbReference type="GO" id="GO:0000030">
    <property type="term" value="F:mannosyltransferase activity"/>
    <property type="evidence" value="ECO:0007669"/>
    <property type="project" value="InterPro"/>
</dbReference>
<dbReference type="GO" id="GO:0009245">
    <property type="term" value="P:lipid A biosynthetic process"/>
    <property type="evidence" value="ECO:0007669"/>
    <property type="project" value="UniProtKB-UniRule"/>
</dbReference>
<dbReference type="GO" id="GO:0009103">
    <property type="term" value="P:lipopolysaccharide biosynthetic process"/>
    <property type="evidence" value="ECO:0007669"/>
    <property type="project" value="UniProtKB-KW"/>
</dbReference>
<dbReference type="GO" id="GO:0006493">
    <property type="term" value="P:protein O-linked glycosylation"/>
    <property type="evidence" value="ECO:0007669"/>
    <property type="project" value="InterPro"/>
</dbReference>
<dbReference type="GO" id="GO:0010041">
    <property type="term" value="P:response to iron(III) ion"/>
    <property type="evidence" value="ECO:0007669"/>
    <property type="project" value="TreeGrafter"/>
</dbReference>
<dbReference type="HAMAP" id="MF_01165">
    <property type="entry name" value="ArnT_transfer"/>
    <property type="match status" value="1"/>
</dbReference>
<dbReference type="InterPro" id="IPR022839">
    <property type="entry name" value="ArnT_tfrase"/>
</dbReference>
<dbReference type="InterPro" id="IPR003342">
    <property type="entry name" value="Glyco_trans_39/83"/>
</dbReference>
<dbReference type="InterPro" id="IPR050297">
    <property type="entry name" value="LipidA_mod_glycosyltrf_83"/>
</dbReference>
<dbReference type="NCBIfam" id="NF009784">
    <property type="entry name" value="PRK13279.1"/>
    <property type="match status" value="1"/>
</dbReference>
<dbReference type="PANTHER" id="PTHR33908">
    <property type="entry name" value="MANNOSYLTRANSFERASE YKCB-RELATED"/>
    <property type="match status" value="1"/>
</dbReference>
<dbReference type="PANTHER" id="PTHR33908:SF3">
    <property type="entry name" value="UNDECAPRENYL PHOSPHATE-ALPHA-4-AMINO-4-DEOXY-L-ARABINOSE ARABINOSYL TRANSFERASE"/>
    <property type="match status" value="1"/>
</dbReference>
<dbReference type="Pfam" id="PF02366">
    <property type="entry name" value="PMT"/>
    <property type="match status" value="1"/>
</dbReference>
<keyword id="KW-0997">Cell inner membrane</keyword>
<keyword id="KW-1003">Cell membrane</keyword>
<keyword id="KW-0328">Glycosyltransferase</keyword>
<keyword id="KW-0441">Lipid A biosynthesis</keyword>
<keyword id="KW-0444">Lipid biosynthesis</keyword>
<keyword id="KW-0443">Lipid metabolism</keyword>
<keyword id="KW-0448">Lipopolysaccharide biosynthesis</keyword>
<keyword id="KW-0472">Membrane</keyword>
<keyword id="KW-1185">Reference proteome</keyword>
<keyword id="KW-0808">Transferase</keyword>
<keyword id="KW-0812">Transmembrane</keyword>
<keyword id="KW-1133">Transmembrane helix</keyword>
<feature type="chain" id="PRO_0000380011" description="Undecaprenyl phosphate-alpha-4-amino-4-deoxy-L-arabinose arabinosyl transferase">
    <location>
        <begin position="1"/>
        <end position="553"/>
    </location>
</feature>
<feature type="transmembrane region" description="Helical" evidence="1">
    <location>
        <begin position="8"/>
        <end position="28"/>
    </location>
</feature>
<feature type="transmembrane region" description="Helical" evidence="1">
    <location>
        <begin position="81"/>
        <end position="101"/>
    </location>
</feature>
<feature type="transmembrane region" description="Helical" evidence="1">
    <location>
        <begin position="113"/>
        <end position="133"/>
    </location>
</feature>
<feature type="transmembrane region" description="Helical" evidence="1">
    <location>
        <begin position="136"/>
        <end position="156"/>
    </location>
</feature>
<feature type="transmembrane region" description="Helical" evidence="1">
    <location>
        <begin position="176"/>
        <end position="196"/>
    </location>
</feature>
<feature type="transmembrane region" description="Helical" evidence="1">
    <location>
        <begin position="204"/>
        <end position="224"/>
    </location>
</feature>
<feature type="transmembrane region" description="Helical" evidence="1">
    <location>
        <begin position="255"/>
        <end position="275"/>
    </location>
</feature>
<feature type="transmembrane region" description="Helical" evidence="1">
    <location>
        <begin position="289"/>
        <end position="309"/>
    </location>
</feature>
<feature type="transmembrane region" description="Helical" evidence="1">
    <location>
        <begin position="313"/>
        <end position="333"/>
    </location>
</feature>
<feature type="transmembrane region" description="Helical" evidence="1">
    <location>
        <begin position="351"/>
        <end position="371"/>
    </location>
</feature>
<feature type="transmembrane region" description="Helical" evidence="1">
    <location>
        <begin position="384"/>
        <end position="404"/>
    </location>
</feature>
<feature type="transmembrane region" description="Helical" evidence="1">
    <location>
        <begin position="412"/>
        <end position="432"/>
    </location>
</feature>